<evidence type="ECO:0000255" key="1">
    <source>
        <dbReference type="HAMAP-Rule" id="MF_01208"/>
    </source>
</evidence>
<sequence length="192" mass="21111">MKNTDAMVIDTLKEVGALLEGHFLLSSGRHSNRYCQCAQLLKYPEKAEKVLKVVADQLKDIDFDLVVGPAMGGVIVAYELGRQLGKPAIFTERENGEMTLRRGFTIEKGQKVVITEDVVTTGKSFKEAAKVIEEQGGEVVAVVCIVDRTPGNVTDFPMYSSIKLDIESFEAENCPLCKEGVPYIKPGSRNIK</sequence>
<name>PYRE_CLOPE</name>
<comment type="function">
    <text evidence="1">Catalyzes the transfer of a ribosyl phosphate group from 5-phosphoribose 1-diphosphate to orotate, leading to the formation of orotidine monophosphate (OMP).</text>
</comment>
<comment type="catalytic activity">
    <reaction evidence="1">
        <text>orotidine 5'-phosphate + diphosphate = orotate + 5-phospho-alpha-D-ribose 1-diphosphate</text>
        <dbReference type="Rhea" id="RHEA:10380"/>
        <dbReference type="ChEBI" id="CHEBI:30839"/>
        <dbReference type="ChEBI" id="CHEBI:33019"/>
        <dbReference type="ChEBI" id="CHEBI:57538"/>
        <dbReference type="ChEBI" id="CHEBI:58017"/>
        <dbReference type="EC" id="2.4.2.10"/>
    </reaction>
</comment>
<comment type="cofactor">
    <cofactor evidence="1">
        <name>Mg(2+)</name>
        <dbReference type="ChEBI" id="CHEBI:18420"/>
    </cofactor>
</comment>
<comment type="pathway">
    <text evidence="1">Pyrimidine metabolism; UMP biosynthesis via de novo pathway; UMP from orotate: step 1/2.</text>
</comment>
<comment type="subunit">
    <text evidence="1">Homodimer.</text>
</comment>
<comment type="similarity">
    <text evidence="1">Belongs to the purine/pyrimidine phosphoribosyltransferase family. PyrE subfamily.</text>
</comment>
<gene>
    <name evidence="1" type="primary">pyrE</name>
    <name type="ordered locus">CPE1177</name>
</gene>
<feature type="chain" id="PRO_0000110689" description="Orotate phosphoribosyltransferase">
    <location>
        <begin position="1"/>
        <end position="192"/>
    </location>
</feature>
<feature type="binding site" evidence="1">
    <location>
        <begin position="116"/>
        <end position="124"/>
    </location>
    <ligand>
        <name>5-phospho-alpha-D-ribose 1-diphosphate</name>
        <dbReference type="ChEBI" id="CHEBI:58017"/>
    </ligand>
</feature>
<feature type="binding site" evidence="1">
    <location>
        <position position="120"/>
    </location>
    <ligand>
        <name>orotate</name>
        <dbReference type="ChEBI" id="CHEBI:30839"/>
    </ligand>
</feature>
<feature type="binding site" evidence="1">
    <location>
        <position position="148"/>
    </location>
    <ligand>
        <name>orotate</name>
        <dbReference type="ChEBI" id="CHEBI:30839"/>
    </ligand>
</feature>
<organism>
    <name type="scientific">Clostridium perfringens (strain 13 / Type A)</name>
    <dbReference type="NCBI Taxonomy" id="195102"/>
    <lineage>
        <taxon>Bacteria</taxon>
        <taxon>Bacillati</taxon>
        <taxon>Bacillota</taxon>
        <taxon>Clostridia</taxon>
        <taxon>Eubacteriales</taxon>
        <taxon>Clostridiaceae</taxon>
        <taxon>Clostridium</taxon>
    </lineage>
</organism>
<accession>Q8XL65</accession>
<protein>
    <recommendedName>
        <fullName evidence="1">Orotate phosphoribosyltransferase</fullName>
        <shortName evidence="1">OPRT</shortName>
        <shortName evidence="1">OPRTase</shortName>
        <ecNumber evidence="1">2.4.2.10</ecNumber>
    </recommendedName>
</protein>
<dbReference type="EC" id="2.4.2.10" evidence="1"/>
<dbReference type="EMBL" id="BA000016">
    <property type="protein sequence ID" value="BAB80883.1"/>
    <property type="molecule type" value="Genomic_DNA"/>
</dbReference>
<dbReference type="RefSeq" id="WP_003456665.1">
    <property type="nucleotide sequence ID" value="NC_003366.1"/>
</dbReference>
<dbReference type="SMR" id="Q8XL65"/>
<dbReference type="STRING" id="195102.gene:10490440"/>
<dbReference type="GeneID" id="93002302"/>
<dbReference type="KEGG" id="cpe:CPE1177"/>
<dbReference type="HOGENOM" id="CLU_074878_3_0_9"/>
<dbReference type="UniPathway" id="UPA00070">
    <property type="reaction ID" value="UER00119"/>
</dbReference>
<dbReference type="Proteomes" id="UP000000818">
    <property type="component" value="Chromosome"/>
</dbReference>
<dbReference type="GO" id="GO:0000287">
    <property type="term" value="F:magnesium ion binding"/>
    <property type="evidence" value="ECO:0007669"/>
    <property type="project" value="UniProtKB-UniRule"/>
</dbReference>
<dbReference type="GO" id="GO:0004588">
    <property type="term" value="F:orotate phosphoribosyltransferase activity"/>
    <property type="evidence" value="ECO:0007669"/>
    <property type="project" value="UniProtKB-UniRule"/>
</dbReference>
<dbReference type="GO" id="GO:0044205">
    <property type="term" value="P:'de novo' UMP biosynthetic process"/>
    <property type="evidence" value="ECO:0007669"/>
    <property type="project" value="UniProtKB-UniRule"/>
</dbReference>
<dbReference type="GO" id="GO:0019856">
    <property type="term" value="P:pyrimidine nucleobase biosynthetic process"/>
    <property type="evidence" value="ECO:0007669"/>
    <property type="project" value="InterPro"/>
</dbReference>
<dbReference type="CDD" id="cd06223">
    <property type="entry name" value="PRTases_typeI"/>
    <property type="match status" value="1"/>
</dbReference>
<dbReference type="Gene3D" id="3.40.50.2020">
    <property type="match status" value="1"/>
</dbReference>
<dbReference type="HAMAP" id="MF_01208">
    <property type="entry name" value="PyrE"/>
    <property type="match status" value="1"/>
</dbReference>
<dbReference type="InterPro" id="IPR023031">
    <property type="entry name" value="OPRT"/>
</dbReference>
<dbReference type="InterPro" id="IPR006273">
    <property type="entry name" value="Orotate_PRibTrfase_bac"/>
</dbReference>
<dbReference type="InterPro" id="IPR000836">
    <property type="entry name" value="PRibTrfase_dom"/>
</dbReference>
<dbReference type="InterPro" id="IPR029057">
    <property type="entry name" value="PRTase-like"/>
</dbReference>
<dbReference type="NCBIfam" id="TIGR01367">
    <property type="entry name" value="pyrE_Therm"/>
    <property type="match status" value="1"/>
</dbReference>
<dbReference type="PANTHER" id="PTHR19278">
    <property type="entry name" value="OROTATE PHOSPHORIBOSYLTRANSFERASE"/>
    <property type="match status" value="1"/>
</dbReference>
<dbReference type="PANTHER" id="PTHR19278:SF9">
    <property type="entry name" value="URIDINE 5'-MONOPHOSPHATE SYNTHASE"/>
    <property type="match status" value="1"/>
</dbReference>
<dbReference type="Pfam" id="PF00156">
    <property type="entry name" value="Pribosyltran"/>
    <property type="match status" value="1"/>
</dbReference>
<dbReference type="SUPFAM" id="SSF53271">
    <property type="entry name" value="PRTase-like"/>
    <property type="match status" value="1"/>
</dbReference>
<proteinExistence type="inferred from homology"/>
<reference key="1">
    <citation type="journal article" date="2002" name="Proc. Natl. Acad. Sci. U.S.A.">
        <title>Complete genome sequence of Clostridium perfringens, an anaerobic flesh-eater.</title>
        <authorList>
            <person name="Shimizu T."/>
            <person name="Ohtani K."/>
            <person name="Hirakawa H."/>
            <person name="Ohshima K."/>
            <person name="Yamashita A."/>
            <person name="Shiba T."/>
            <person name="Ogasawara N."/>
            <person name="Hattori M."/>
            <person name="Kuhara S."/>
            <person name="Hayashi H."/>
        </authorList>
    </citation>
    <scope>NUCLEOTIDE SEQUENCE [LARGE SCALE GENOMIC DNA]</scope>
    <source>
        <strain>13 / Type A</strain>
    </source>
</reference>
<keyword id="KW-0328">Glycosyltransferase</keyword>
<keyword id="KW-0460">Magnesium</keyword>
<keyword id="KW-0665">Pyrimidine biosynthesis</keyword>
<keyword id="KW-1185">Reference proteome</keyword>
<keyword id="KW-0808">Transferase</keyword>